<keyword id="KW-0966">Cell projection</keyword>
<keyword id="KW-0969">Cilium</keyword>
<keyword id="KW-0282">Flagellum</keyword>
<keyword id="KW-1185">Reference proteome</keyword>
<gene>
    <name type="primary">GARIN2</name>
    <name type="synonym">FAM71D</name>
    <name type="ORF">QtsA-10859</name>
</gene>
<feature type="chain" id="PRO_0000089896" description="Golgi-associated RAB2 interactor protein 2">
    <location>
        <begin position="1" status="less than"/>
        <end position="346"/>
    </location>
</feature>
<feature type="region of interest" description="Disordered" evidence="2">
    <location>
        <begin position="275"/>
        <end position="346"/>
    </location>
</feature>
<feature type="compositionally biased region" description="Basic and acidic residues" evidence="2">
    <location>
        <begin position="283"/>
        <end position="297"/>
    </location>
</feature>
<feature type="compositionally biased region" description="Basic and acidic residues" evidence="2">
    <location>
        <begin position="334"/>
        <end position="346"/>
    </location>
</feature>
<feature type="non-terminal residue">
    <location>
        <position position="1"/>
    </location>
</feature>
<reference key="1">
    <citation type="journal article" date="2002" name="BMC Genomics">
        <title>Cynomolgus monkey testicular cDNAs for discovery of novel human genes in the human genome sequence.</title>
        <authorList>
            <person name="Osada N."/>
            <person name="Hida M."/>
            <person name="Kusuda J."/>
            <person name="Tanuma R."/>
            <person name="Hirata M."/>
            <person name="Suto Y."/>
            <person name="Hirai M."/>
            <person name="Terao K."/>
            <person name="Sugano S."/>
            <person name="Hashimoto K."/>
        </authorList>
    </citation>
    <scope>NUCLEOTIDE SEQUENCE [LARGE SCALE MRNA]</scope>
    <source>
        <tissue>Testis</tissue>
    </source>
</reference>
<comment type="function">
    <text evidence="1">Seems to play a role in sperm motility.</text>
</comment>
<comment type="subunit">
    <text evidence="1">Interacts with CALM1.</text>
</comment>
<comment type="subcellular location">
    <subcellularLocation>
        <location evidence="1">Cell projection</location>
        <location evidence="1">Cilium</location>
        <location evidence="1">Flagellum</location>
    </subcellularLocation>
    <text evidence="1">In mature sperm, localizes in the midpiece of flagella.</text>
</comment>
<comment type="similarity">
    <text evidence="3">Belongs to the GARIN family.</text>
</comment>
<comment type="sequence caution" evidence="3">
    <conflict type="erroneous initiation">
        <sequence resource="EMBL-CDS" id="BAB62945"/>
    </conflict>
    <text>Truncated N-terminus.</text>
</comment>
<dbReference type="EMBL" id="AB070000">
    <property type="protein sequence ID" value="BAB62945.1"/>
    <property type="status" value="ALT_INIT"/>
    <property type="molecule type" value="mRNA"/>
</dbReference>
<dbReference type="STRING" id="9541.ENSMFAP00000023951"/>
<dbReference type="eggNOG" id="ENOG502S1VC">
    <property type="taxonomic scope" value="Eukaryota"/>
</dbReference>
<dbReference type="Proteomes" id="UP000233100">
    <property type="component" value="Unplaced"/>
</dbReference>
<dbReference type="GO" id="GO:0005634">
    <property type="term" value="C:nucleus"/>
    <property type="evidence" value="ECO:0007669"/>
    <property type="project" value="TreeGrafter"/>
</dbReference>
<dbReference type="GO" id="GO:0097225">
    <property type="term" value="C:sperm midpiece"/>
    <property type="evidence" value="ECO:0000250"/>
    <property type="project" value="UniProtKB"/>
</dbReference>
<dbReference type="GO" id="GO:0030317">
    <property type="term" value="P:flagellated sperm motility"/>
    <property type="evidence" value="ECO:0000250"/>
    <property type="project" value="UniProtKB"/>
</dbReference>
<dbReference type="InterPro" id="IPR022168">
    <property type="entry name" value="GARIL-like_Rab2B-bd"/>
</dbReference>
<dbReference type="PANTHER" id="PTHR22574">
    <property type="match status" value="1"/>
</dbReference>
<dbReference type="PANTHER" id="PTHR22574:SF6">
    <property type="entry name" value="GOLGI-ASSOCIATED RAB2 INTERACTOR PROTEIN 2"/>
    <property type="match status" value="1"/>
</dbReference>
<dbReference type="Pfam" id="PF12480">
    <property type="entry name" value="GARIL_Rab2_bd"/>
    <property type="match status" value="1"/>
</dbReference>
<organism>
    <name type="scientific">Macaca fascicularis</name>
    <name type="common">Crab-eating macaque</name>
    <name type="synonym">Cynomolgus monkey</name>
    <dbReference type="NCBI Taxonomy" id="9541"/>
    <lineage>
        <taxon>Eukaryota</taxon>
        <taxon>Metazoa</taxon>
        <taxon>Chordata</taxon>
        <taxon>Craniata</taxon>
        <taxon>Vertebrata</taxon>
        <taxon>Euteleostomi</taxon>
        <taxon>Mammalia</taxon>
        <taxon>Eutheria</taxon>
        <taxon>Euarchontoglires</taxon>
        <taxon>Primates</taxon>
        <taxon>Haplorrhini</taxon>
        <taxon>Catarrhini</taxon>
        <taxon>Cercopithecidae</taxon>
        <taxon>Cercopithecinae</taxon>
        <taxon>Macaca</taxon>
    </lineage>
</organism>
<sequence length="346" mass="38766">SSTHKIPNVMLLAHLTPGSRKDTEPLFKSLLTSPPAEKLVLTRFLPLQFVTLSVHDAENMRLKVKLVSGRAYYLQLCTSACKQDTLFSQWVALISLLNQEKAKVSKVSEVSSLSGITNSTDVTGSTDVMDITAFTAILTPYMYAGRGPEHVRDSIDFSEFTDITDITDVTDLPENEVPEVPDIRIVTEVIEVREATEVTDHSDITNCSGVTVVFENNDLIRAKQEEKEKLKNILKPGCLQDTKSKSELKESSKHVTISNITLTFEGKRYFQTTLTPVESEANTSKEMENKTSEEKTPDFQSTALEAEESRSLRTESNTSGNECEERKVKQKKTKLVEKHVRQPKDF</sequence>
<proteinExistence type="evidence at transcript level"/>
<accession>Q95K27</accession>
<protein>
    <recommendedName>
        <fullName>Golgi-associated RAB2 interactor protein 2</fullName>
    </recommendedName>
</protein>
<name>GAR2_MACFA</name>
<evidence type="ECO:0000250" key="1">
    <source>
        <dbReference type="UniProtKB" id="D3YV92"/>
    </source>
</evidence>
<evidence type="ECO:0000256" key="2">
    <source>
        <dbReference type="SAM" id="MobiDB-lite"/>
    </source>
</evidence>
<evidence type="ECO:0000305" key="3"/>